<proteinExistence type="evidence at protein level"/>
<dbReference type="EMBL" id="AF333770">
    <property type="protein sequence ID" value="AAG52890.1"/>
    <property type="molecule type" value="mRNA"/>
</dbReference>
<dbReference type="EMBL" id="AK142816">
    <property type="protein sequence ID" value="BAE25200.1"/>
    <property type="molecule type" value="mRNA"/>
</dbReference>
<dbReference type="EMBL" id="CH466525">
    <property type="protein sequence ID" value="EDL11532.1"/>
    <property type="molecule type" value="Genomic_DNA"/>
</dbReference>
<dbReference type="EMBL" id="BC034628">
    <property type="protein sequence ID" value="AAH34628.1"/>
    <property type="molecule type" value="mRNA"/>
</dbReference>
<dbReference type="CCDS" id="CCDS40482.1"/>
<dbReference type="RefSeq" id="NP_569724.2">
    <property type="nucleotide sequence ID" value="NM_130457.2"/>
</dbReference>
<dbReference type="SMR" id="Q99P47"/>
<dbReference type="FunCoup" id="Q99P47">
    <property type="interactions" value="208"/>
</dbReference>
<dbReference type="STRING" id="10090.ENSMUSP00000034225"/>
<dbReference type="GlyConnect" id="2232">
    <property type="glycosylation" value="6 N-Linked glycans (2 sites)"/>
</dbReference>
<dbReference type="GlyCosmos" id="Q99P47">
    <property type="glycosylation" value="13 sites, 6 glycans"/>
</dbReference>
<dbReference type="GlyGen" id="Q99P47">
    <property type="glycosylation" value="15 sites, 11 N-linked glycans (7 sites), 1 O-linked glycan (1 site)"/>
</dbReference>
<dbReference type="iPTMnet" id="Q99P47"/>
<dbReference type="PhosphoSitePlus" id="Q99P47"/>
<dbReference type="PaxDb" id="10090-ENSMUSP00000112511"/>
<dbReference type="ProteomicsDB" id="285525"/>
<dbReference type="DNASU" id="170571"/>
<dbReference type="Ensembl" id="ENSMUST00000034225.7">
    <property type="protein sequence ID" value="ENSMUSP00000034225.7"/>
    <property type="gene ID" value="ENSMUSG00000031772.18"/>
</dbReference>
<dbReference type="GeneID" id="170571"/>
<dbReference type="KEGG" id="mmu:170571"/>
<dbReference type="UCSC" id="uc009nnj.1">
    <property type="organism name" value="mouse"/>
</dbReference>
<dbReference type="AGR" id="MGI:2183572"/>
<dbReference type="CTD" id="85445"/>
<dbReference type="MGI" id="MGI:2183572">
    <property type="gene designation" value="Cntnap4"/>
</dbReference>
<dbReference type="VEuPathDB" id="HostDB:ENSMUSG00000031772"/>
<dbReference type="eggNOG" id="KOG3516">
    <property type="taxonomic scope" value="Eukaryota"/>
</dbReference>
<dbReference type="GeneTree" id="ENSGT00940000157674"/>
<dbReference type="HOGENOM" id="CLU_003504_1_0_1"/>
<dbReference type="InParanoid" id="Q99P47"/>
<dbReference type="OMA" id="CANTGYM"/>
<dbReference type="OrthoDB" id="26719at2759"/>
<dbReference type="BioGRID-ORCS" id="170571">
    <property type="hits" value="2 hits in 77 CRISPR screens"/>
</dbReference>
<dbReference type="ChiTaRS" id="Cntnap4">
    <property type="organism name" value="mouse"/>
</dbReference>
<dbReference type="PRO" id="PR:Q99P47"/>
<dbReference type="Proteomes" id="UP000000589">
    <property type="component" value="Chromosome 8"/>
</dbReference>
<dbReference type="RNAct" id="Q99P47">
    <property type="molecule type" value="protein"/>
</dbReference>
<dbReference type="Bgee" id="ENSMUSG00000031772">
    <property type="expression patterns" value="Expressed in substantia nigra and 92 other cell types or tissues"/>
</dbReference>
<dbReference type="ExpressionAtlas" id="Q99P47">
    <property type="expression patterns" value="baseline and differential"/>
</dbReference>
<dbReference type="GO" id="GO:0030425">
    <property type="term" value="C:dendrite"/>
    <property type="evidence" value="ECO:0000314"/>
    <property type="project" value="MGI"/>
</dbReference>
<dbReference type="GO" id="GO:0098982">
    <property type="term" value="C:GABA-ergic synapse"/>
    <property type="evidence" value="ECO:0000314"/>
    <property type="project" value="SynGO"/>
</dbReference>
<dbReference type="GO" id="GO:0005886">
    <property type="term" value="C:plasma membrane"/>
    <property type="evidence" value="ECO:0000314"/>
    <property type="project" value="MGI"/>
</dbReference>
<dbReference type="GO" id="GO:0042734">
    <property type="term" value="C:presynaptic membrane"/>
    <property type="evidence" value="ECO:0000314"/>
    <property type="project" value="UniProtKB"/>
</dbReference>
<dbReference type="GO" id="GO:0030165">
    <property type="term" value="F:PDZ domain binding"/>
    <property type="evidence" value="ECO:0000314"/>
    <property type="project" value="MGI"/>
</dbReference>
<dbReference type="GO" id="GO:0007155">
    <property type="term" value="P:cell adhesion"/>
    <property type="evidence" value="ECO:0007669"/>
    <property type="project" value="UniProtKB-KW"/>
</dbReference>
<dbReference type="GO" id="GO:0050804">
    <property type="term" value="P:modulation of chemical synaptic transmission"/>
    <property type="evidence" value="ECO:0000314"/>
    <property type="project" value="SynGO"/>
</dbReference>
<dbReference type="GO" id="GO:0061351">
    <property type="term" value="P:neural precursor cell proliferation"/>
    <property type="evidence" value="ECO:0000315"/>
    <property type="project" value="MGI"/>
</dbReference>
<dbReference type="GO" id="GO:0030182">
    <property type="term" value="P:neuron differentiation"/>
    <property type="evidence" value="ECO:0000314"/>
    <property type="project" value="MGI"/>
</dbReference>
<dbReference type="GO" id="GO:2000821">
    <property type="term" value="P:regulation of grooming behavior"/>
    <property type="evidence" value="ECO:0000315"/>
    <property type="project" value="UniProtKB"/>
</dbReference>
<dbReference type="GO" id="GO:0050807">
    <property type="term" value="P:regulation of synapse organization"/>
    <property type="evidence" value="ECO:0000314"/>
    <property type="project" value="SynGO"/>
</dbReference>
<dbReference type="GO" id="GO:0032225">
    <property type="term" value="P:regulation of synaptic transmission, dopaminergic"/>
    <property type="evidence" value="ECO:0000315"/>
    <property type="project" value="UniProtKB"/>
</dbReference>
<dbReference type="GO" id="GO:0032228">
    <property type="term" value="P:regulation of synaptic transmission, GABAergic"/>
    <property type="evidence" value="ECO:0000315"/>
    <property type="project" value="UniProtKB"/>
</dbReference>
<dbReference type="CDD" id="cd00054">
    <property type="entry name" value="EGF_CA"/>
    <property type="match status" value="1"/>
</dbReference>
<dbReference type="CDD" id="cd00057">
    <property type="entry name" value="FA58C"/>
    <property type="match status" value="1"/>
</dbReference>
<dbReference type="CDD" id="cd00110">
    <property type="entry name" value="LamG"/>
    <property type="match status" value="4"/>
</dbReference>
<dbReference type="FunFam" id="2.60.120.1000:FF:000005">
    <property type="entry name" value="Contactin associated protein-like 2"/>
    <property type="match status" value="1"/>
</dbReference>
<dbReference type="FunFam" id="2.60.120.200:FF:000088">
    <property type="entry name" value="Contactin associated protein-like 2"/>
    <property type="match status" value="1"/>
</dbReference>
<dbReference type="FunFam" id="2.60.120.260:FF:000016">
    <property type="entry name" value="Contactin-associated protein-like 4 isoform 1"/>
    <property type="match status" value="1"/>
</dbReference>
<dbReference type="FunFam" id="2.60.120.200:FF:000026">
    <property type="entry name" value="contactin-associated protein-like 4 isoform X1"/>
    <property type="match status" value="1"/>
</dbReference>
<dbReference type="FunFam" id="2.10.25.10:FF:000015">
    <property type="entry name" value="neurexin-1 isoform X1"/>
    <property type="match status" value="1"/>
</dbReference>
<dbReference type="Gene3D" id="2.60.120.1000">
    <property type="match status" value="1"/>
</dbReference>
<dbReference type="Gene3D" id="2.60.120.200">
    <property type="match status" value="4"/>
</dbReference>
<dbReference type="Gene3D" id="2.60.120.260">
    <property type="entry name" value="Galactose-binding domain-like"/>
    <property type="match status" value="1"/>
</dbReference>
<dbReference type="Gene3D" id="2.10.25.10">
    <property type="entry name" value="Laminin"/>
    <property type="match status" value="2"/>
</dbReference>
<dbReference type="InterPro" id="IPR013320">
    <property type="entry name" value="ConA-like_dom_sf"/>
</dbReference>
<dbReference type="InterPro" id="IPR000742">
    <property type="entry name" value="EGF-like_dom"/>
</dbReference>
<dbReference type="InterPro" id="IPR000421">
    <property type="entry name" value="FA58C"/>
</dbReference>
<dbReference type="InterPro" id="IPR036056">
    <property type="entry name" value="Fibrinogen-like_C"/>
</dbReference>
<dbReference type="InterPro" id="IPR002181">
    <property type="entry name" value="Fibrinogen_a/b/g_C_dom"/>
</dbReference>
<dbReference type="InterPro" id="IPR008979">
    <property type="entry name" value="Galactose-bd-like_sf"/>
</dbReference>
<dbReference type="InterPro" id="IPR001791">
    <property type="entry name" value="Laminin_G"/>
</dbReference>
<dbReference type="InterPro" id="IPR050372">
    <property type="entry name" value="Neurexin-related_CASP"/>
</dbReference>
<dbReference type="NCBIfam" id="NF040941">
    <property type="entry name" value="GGGWT_bact"/>
    <property type="match status" value="1"/>
</dbReference>
<dbReference type="PANTHER" id="PTHR15036:SF40">
    <property type="entry name" value="CONTACTIN-ASSOCIATED PROTEIN-LIKE 4"/>
    <property type="match status" value="1"/>
</dbReference>
<dbReference type="PANTHER" id="PTHR15036">
    <property type="entry name" value="PIKACHURIN-LIKE PROTEIN"/>
    <property type="match status" value="1"/>
</dbReference>
<dbReference type="Pfam" id="PF00754">
    <property type="entry name" value="F5_F8_type_C"/>
    <property type="match status" value="1"/>
</dbReference>
<dbReference type="Pfam" id="PF02210">
    <property type="entry name" value="Laminin_G_2"/>
    <property type="match status" value="4"/>
</dbReference>
<dbReference type="SMART" id="SM00181">
    <property type="entry name" value="EGF"/>
    <property type="match status" value="2"/>
</dbReference>
<dbReference type="SMART" id="SM00231">
    <property type="entry name" value="FA58C"/>
    <property type="match status" value="1"/>
</dbReference>
<dbReference type="SMART" id="SM00282">
    <property type="entry name" value="LamG"/>
    <property type="match status" value="4"/>
</dbReference>
<dbReference type="SUPFAM" id="SSF49899">
    <property type="entry name" value="Concanavalin A-like lectins/glucanases"/>
    <property type="match status" value="4"/>
</dbReference>
<dbReference type="SUPFAM" id="SSF57196">
    <property type="entry name" value="EGF/Laminin"/>
    <property type="match status" value="1"/>
</dbReference>
<dbReference type="SUPFAM" id="SSF56496">
    <property type="entry name" value="Fibrinogen C-terminal domain-like"/>
    <property type="match status" value="1"/>
</dbReference>
<dbReference type="SUPFAM" id="SSF49785">
    <property type="entry name" value="Galactose-binding domain-like"/>
    <property type="match status" value="1"/>
</dbReference>
<dbReference type="PROSITE" id="PS50026">
    <property type="entry name" value="EGF_3"/>
    <property type="match status" value="2"/>
</dbReference>
<dbReference type="PROSITE" id="PS01285">
    <property type="entry name" value="FA58C_1"/>
    <property type="match status" value="1"/>
</dbReference>
<dbReference type="PROSITE" id="PS01286">
    <property type="entry name" value="FA58C_2"/>
    <property type="match status" value="1"/>
</dbReference>
<dbReference type="PROSITE" id="PS50022">
    <property type="entry name" value="FA58C_3"/>
    <property type="match status" value="1"/>
</dbReference>
<dbReference type="PROSITE" id="PS51406">
    <property type="entry name" value="FIBRINOGEN_C_2"/>
    <property type="match status" value="1"/>
</dbReference>
<dbReference type="PROSITE" id="PS50025">
    <property type="entry name" value="LAM_G_DOMAIN"/>
    <property type="match status" value="4"/>
</dbReference>
<name>CNTP4_MOUSE</name>
<comment type="function">
    <text evidence="7">Presynaptic protein involved in both dopaminergic synaptic transmission and GABAergic system, thereby participating in the structural maturation of inhibitory interneuron synapses. Involved in the dopaminergic synaptic transmission by attenuating dopamine release through a presynaptic mechanism. Also participates in the GABAergic system.</text>
</comment>
<comment type="subunit">
    <text evidence="1">Interacts with TIAM1.</text>
</comment>
<comment type="subcellular location">
    <subcellularLocation>
        <location evidence="7">Presynaptic cell membrane</location>
        <topology evidence="7">Single-pass type I membrane protein</topology>
    </subcellularLocation>
    <text evidence="7">Specifically present within the presynaptic compartment of synapses.</text>
</comment>
<comment type="tissue specificity">
    <text evidence="7">Specifically present in developing cortical interneurons: highly expressed in cortical parvalbumin (PV) cells and midbrain dopaminergic neurons and is localized presynaptically (at protein level). Also present in the substantia nigra pars compacta (SnC) and ventral tegmental area (VTA) midbrain dopaminergic projection populations.</text>
</comment>
<comment type="disruption phenotype">
    <text evidence="7">Synaptic defects characterized by increased dopamine but decreased GABA signaling. A reduction in the output of cortical parvalbumin (PV)-positive GABAergic basket cells is observed, together with an increase of midbrain dopaminergic release in the nucleus accumbens. Increased dopaminergic signaling induces behavior abnormalities, characterized by severe and highly penetrant over-grooming behavior, resulting in whisker, face and sometimes body hair loss but rarely lesions. The over-grooming phenotype can be pharmacologically reversed following administration of haloperidol drug.</text>
</comment>
<comment type="similarity">
    <text evidence="8">Belongs to the neurexin family.</text>
</comment>
<sequence length="1310" mass="144730">MNMGSVAGAVLKMLLLLSTQNWNRVEAGNSYDCDEPLVSALPQASFSSSSELSSSHGPGFARLNRRDGAGGWSPLVSNKYQWLQIDLGERMEVTSVATQGGYGSSNWVTSYLLMFSDSGRNWKQYRQEDSIWGFSGNANADSVVYYRLQPSIKARFLRFIPLEWNPKGRIGMRIEVFGCAYRSVVIDLDGKSSLLYRFDQNSLSPIRDIISLKFKTMESDGILLHRAGPAGDHITLELRRGKLFLLINSGDARLTSSSTLINLTLGSLLDDQHWHSVLIQRLGKQVNFTVDEHRRHFHAQGEFNYLDLDYEISFGGISAPAKSVSLPYKHFHGCLENLFYNGVDVIGLVKEHSPQIITMGNASFSCSQPQSMPLTFLSPRSYLVLPASTKEEAISASFQFRTWNKAGLLLFSELQLVSGSLLLLLSDGKLKLTLYQPGKSPSDITAGAGLGDGQWHSVSLSAKRNHLSVVVDGHISPASPWLGPEQVNSGGVFYFGGCPDKGFGSKCKSPLGGFQGCMRLISINNKMVDLIAVQQGALGNFSDLQIDSCGISDRCLPNSCEHGGECSQSWSTFHCNCTNTGYTGATCHSSVYEQSCEAYKHQGNASGFYYIDSDGSGPLQPFLLYCNMTETAWTVMQHNGSDLMRVRNTHSENAHTGVFEYTASMEQLQAAINRAEHCQQELVYYCKKSRLVNQQDGSPRSWWVGRTNETQTYWGGSLPVHQKCTCGLEGNCIDAQYHCNCDADLNEWTNDTGFLSYKEHLPVTKIVITDTGRPHSEAAYKLGPLLCRGDRPFWNAASFNTEASYLHFPTFHGELSADVSFFFKTTALSGVFLENLGITDFIRIELRSPTTVTFSFDVGNGPFELSVHSPTHFNDNQWHHVRVERNMKEASLRVDELPPKIQAAPTDGHVLLQLNSQLFVGGTATRQRGFLGCIRSLQLNGMALDLEERATVTPGVQPGCRGHCGSYGKLCRHGGKCREKPSGFFCDCSSSAYAGPFCSKEISAYFGSGSSVIYNFQENYSLSKNSSFHAASFHGDMKLSREMIKFSFRTTRAPSLLLHMSSFYKEYLSIIIAKNGSLQIRYKLNKYHEPDVISFDLKSMADGQLHHIKINREEGMVFVEIDENTRRQTYLSSGTEFSAVKSLVLGRMLEYSDVDQETALAAAHGFTGCLSAVQFSHIAPLKAALQPGPPAPVTVTGHVTESSCVAPSGTDATSRERTHSFADHSGTMDDREPLTHAIKSDSAVIGGLIAVVIFILLCVSAIAVRIYQQKRLYKRNEAKRSENVDSAEAVLKSELHIQNAVGENQKEYFF</sequence>
<gene>
    <name type="primary">Cntnap4</name>
    <name type="synonym">Caspr4</name>
</gene>
<evidence type="ECO:0000250" key="1"/>
<evidence type="ECO:0000255" key="2"/>
<evidence type="ECO:0000255" key="3">
    <source>
        <dbReference type="PROSITE-ProRule" id="PRU00076"/>
    </source>
</evidence>
<evidence type="ECO:0000255" key="4">
    <source>
        <dbReference type="PROSITE-ProRule" id="PRU00081"/>
    </source>
</evidence>
<evidence type="ECO:0000255" key="5">
    <source>
        <dbReference type="PROSITE-ProRule" id="PRU00122"/>
    </source>
</evidence>
<evidence type="ECO:0000255" key="6">
    <source>
        <dbReference type="PROSITE-ProRule" id="PRU00739"/>
    </source>
</evidence>
<evidence type="ECO:0000269" key="7">
    <source>
    </source>
</evidence>
<evidence type="ECO:0000305" key="8"/>
<reference key="1">
    <citation type="submission" date="2001-01" db="EMBL/GenBank/DDBJ databases">
        <title>Identification of two new members of the Caspr family.</title>
        <authorList>
            <person name="Spiegel I."/>
            <person name="Schaeren-Wiemers N."/>
            <person name="Peles E."/>
        </authorList>
    </citation>
    <scope>NUCLEOTIDE SEQUENCE [MRNA]</scope>
    <source>
        <tissue>Brain</tissue>
    </source>
</reference>
<reference key="2">
    <citation type="journal article" date="2005" name="Science">
        <title>The transcriptional landscape of the mammalian genome.</title>
        <authorList>
            <person name="Carninci P."/>
            <person name="Kasukawa T."/>
            <person name="Katayama S."/>
            <person name="Gough J."/>
            <person name="Frith M.C."/>
            <person name="Maeda N."/>
            <person name="Oyama R."/>
            <person name="Ravasi T."/>
            <person name="Lenhard B."/>
            <person name="Wells C."/>
            <person name="Kodzius R."/>
            <person name="Shimokawa K."/>
            <person name="Bajic V.B."/>
            <person name="Brenner S.E."/>
            <person name="Batalov S."/>
            <person name="Forrest A.R."/>
            <person name="Zavolan M."/>
            <person name="Davis M.J."/>
            <person name="Wilming L.G."/>
            <person name="Aidinis V."/>
            <person name="Allen J.E."/>
            <person name="Ambesi-Impiombato A."/>
            <person name="Apweiler R."/>
            <person name="Aturaliya R.N."/>
            <person name="Bailey T.L."/>
            <person name="Bansal M."/>
            <person name="Baxter L."/>
            <person name="Beisel K.W."/>
            <person name="Bersano T."/>
            <person name="Bono H."/>
            <person name="Chalk A.M."/>
            <person name="Chiu K.P."/>
            <person name="Choudhary V."/>
            <person name="Christoffels A."/>
            <person name="Clutterbuck D.R."/>
            <person name="Crowe M.L."/>
            <person name="Dalla E."/>
            <person name="Dalrymple B.P."/>
            <person name="de Bono B."/>
            <person name="Della Gatta G."/>
            <person name="di Bernardo D."/>
            <person name="Down T."/>
            <person name="Engstrom P."/>
            <person name="Fagiolini M."/>
            <person name="Faulkner G."/>
            <person name="Fletcher C.F."/>
            <person name="Fukushima T."/>
            <person name="Furuno M."/>
            <person name="Futaki S."/>
            <person name="Gariboldi M."/>
            <person name="Georgii-Hemming P."/>
            <person name="Gingeras T.R."/>
            <person name="Gojobori T."/>
            <person name="Green R.E."/>
            <person name="Gustincich S."/>
            <person name="Harbers M."/>
            <person name="Hayashi Y."/>
            <person name="Hensch T.K."/>
            <person name="Hirokawa N."/>
            <person name="Hill D."/>
            <person name="Huminiecki L."/>
            <person name="Iacono M."/>
            <person name="Ikeo K."/>
            <person name="Iwama A."/>
            <person name="Ishikawa T."/>
            <person name="Jakt M."/>
            <person name="Kanapin A."/>
            <person name="Katoh M."/>
            <person name="Kawasawa Y."/>
            <person name="Kelso J."/>
            <person name="Kitamura H."/>
            <person name="Kitano H."/>
            <person name="Kollias G."/>
            <person name="Krishnan S.P."/>
            <person name="Kruger A."/>
            <person name="Kummerfeld S.K."/>
            <person name="Kurochkin I.V."/>
            <person name="Lareau L.F."/>
            <person name="Lazarevic D."/>
            <person name="Lipovich L."/>
            <person name="Liu J."/>
            <person name="Liuni S."/>
            <person name="McWilliam S."/>
            <person name="Madan Babu M."/>
            <person name="Madera M."/>
            <person name="Marchionni L."/>
            <person name="Matsuda H."/>
            <person name="Matsuzawa S."/>
            <person name="Miki H."/>
            <person name="Mignone F."/>
            <person name="Miyake S."/>
            <person name="Morris K."/>
            <person name="Mottagui-Tabar S."/>
            <person name="Mulder N."/>
            <person name="Nakano N."/>
            <person name="Nakauchi H."/>
            <person name="Ng P."/>
            <person name="Nilsson R."/>
            <person name="Nishiguchi S."/>
            <person name="Nishikawa S."/>
            <person name="Nori F."/>
            <person name="Ohara O."/>
            <person name="Okazaki Y."/>
            <person name="Orlando V."/>
            <person name="Pang K.C."/>
            <person name="Pavan W.J."/>
            <person name="Pavesi G."/>
            <person name="Pesole G."/>
            <person name="Petrovsky N."/>
            <person name="Piazza S."/>
            <person name="Reed J."/>
            <person name="Reid J.F."/>
            <person name="Ring B.Z."/>
            <person name="Ringwald M."/>
            <person name="Rost B."/>
            <person name="Ruan Y."/>
            <person name="Salzberg S.L."/>
            <person name="Sandelin A."/>
            <person name="Schneider C."/>
            <person name="Schoenbach C."/>
            <person name="Sekiguchi K."/>
            <person name="Semple C.A."/>
            <person name="Seno S."/>
            <person name="Sessa L."/>
            <person name="Sheng Y."/>
            <person name="Shibata Y."/>
            <person name="Shimada H."/>
            <person name="Shimada K."/>
            <person name="Silva D."/>
            <person name="Sinclair B."/>
            <person name="Sperling S."/>
            <person name="Stupka E."/>
            <person name="Sugiura K."/>
            <person name="Sultana R."/>
            <person name="Takenaka Y."/>
            <person name="Taki K."/>
            <person name="Tammoja K."/>
            <person name="Tan S.L."/>
            <person name="Tang S."/>
            <person name="Taylor M.S."/>
            <person name="Tegner J."/>
            <person name="Teichmann S.A."/>
            <person name="Ueda H.R."/>
            <person name="van Nimwegen E."/>
            <person name="Verardo R."/>
            <person name="Wei C.L."/>
            <person name="Yagi K."/>
            <person name="Yamanishi H."/>
            <person name="Zabarovsky E."/>
            <person name="Zhu S."/>
            <person name="Zimmer A."/>
            <person name="Hide W."/>
            <person name="Bult C."/>
            <person name="Grimmond S.M."/>
            <person name="Teasdale R.D."/>
            <person name="Liu E.T."/>
            <person name="Brusic V."/>
            <person name="Quackenbush J."/>
            <person name="Wahlestedt C."/>
            <person name="Mattick J.S."/>
            <person name="Hume D.A."/>
            <person name="Kai C."/>
            <person name="Sasaki D."/>
            <person name="Tomaru Y."/>
            <person name="Fukuda S."/>
            <person name="Kanamori-Katayama M."/>
            <person name="Suzuki M."/>
            <person name="Aoki J."/>
            <person name="Arakawa T."/>
            <person name="Iida J."/>
            <person name="Imamura K."/>
            <person name="Itoh M."/>
            <person name="Kato T."/>
            <person name="Kawaji H."/>
            <person name="Kawagashira N."/>
            <person name="Kawashima T."/>
            <person name="Kojima M."/>
            <person name="Kondo S."/>
            <person name="Konno H."/>
            <person name="Nakano K."/>
            <person name="Ninomiya N."/>
            <person name="Nishio T."/>
            <person name="Okada M."/>
            <person name="Plessy C."/>
            <person name="Shibata K."/>
            <person name="Shiraki T."/>
            <person name="Suzuki S."/>
            <person name="Tagami M."/>
            <person name="Waki K."/>
            <person name="Watahiki A."/>
            <person name="Okamura-Oho Y."/>
            <person name="Suzuki H."/>
            <person name="Kawai J."/>
            <person name="Hayashizaki Y."/>
        </authorList>
    </citation>
    <scope>NUCLEOTIDE SEQUENCE [LARGE SCALE MRNA]</scope>
    <source>
        <strain>C57BL/6J</strain>
        <tissue>Head</tissue>
    </source>
</reference>
<reference key="3">
    <citation type="submission" date="2005-07" db="EMBL/GenBank/DDBJ databases">
        <authorList>
            <person name="Mural R.J."/>
            <person name="Adams M.D."/>
            <person name="Myers E.W."/>
            <person name="Smith H.O."/>
            <person name="Venter J.C."/>
        </authorList>
    </citation>
    <scope>NUCLEOTIDE SEQUENCE [LARGE SCALE GENOMIC DNA]</scope>
</reference>
<reference key="4">
    <citation type="journal article" date="2004" name="Genome Res.">
        <title>The status, quality, and expansion of the NIH full-length cDNA project: the Mammalian Gene Collection (MGC).</title>
        <authorList>
            <consortium name="The MGC Project Team"/>
        </authorList>
    </citation>
    <scope>NUCLEOTIDE SEQUENCE [LARGE SCALE MRNA]</scope>
    <source>
        <tissue>Eye</tissue>
    </source>
</reference>
<reference key="5">
    <citation type="journal article" date="2010" name="Cell">
        <title>A tissue-specific atlas of mouse protein phosphorylation and expression.</title>
        <authorList>
            <person name="Huttlin E.L."/>
            <person name="Jedrychowski M.P."/>
            <person name="Elias J.E."/>
            <person name="Goswami T."/>
            <person name="Rad R."/>
            <person name="Beausoleil S.A."/>
            <person name="Villen J."/>
            <person name="Haas W."/>
            <person name="Sowa M.E."/>
            <person name="Gygi S.P."/>
        </authorList>
    </citation>
    <scope>IDENTIFICATION BY MASS SPECTROMETRY [LARGE SCALE ANALYSIS]</scope>
    <source>
        <tissue>Brain</tissue>
    </source>
</reference>
<reference key="6">
    <citation type="journal article" date="2014" name="Nature">
        <title>Cntnap4 differentially contributes to GABAergic and dopaminergic synaptic transmission.</title>
        <authorList>
            <person name="Karayannis T."/>
            <person name="Au E."/>
            <person name="Patel J.C."/>
            <person name="Kruglikov I."/>
            <person name="Markx S."/>
            <person name="Delorme R."/>
            <person name="Heron D."/>
            <person name="Salomon D."/>
            <person name="Glessner J."/>
            <person name="Restituito S."/>
            <person name="Gordon A."/>
            <person name="Rodriguez-Murillo L."/>
            <person name="Roy N.C."/>
            <person name="Gogos J.A."/>
            <person name="Rudy B."/>
            <person name="Rice M.E."/>
            <person name="Karayiorgou M."/>
            <person name="Hakonarson H."/>
            <person name="Keren B."/>
            <person name="Huguet G."/>
            <person name="Bourgeron T."/>
            <person name="Hoeffer C."/>
            <person name="Tsien R.W."/>
            <person name="Peles E."/>
            <person name="Fishell G."/>
        </authorList>
    </citation>
    <scope>FUNCTION</scope>
    <scope>SUBCELLULAR LOCATION</scope>
    <scope>TISSUE SPECIFICITY</scope>
    <scope>DISRUPTION PHENOTYPE</scope>
</reference>
<accession>Q99P47</accession>
<accession>Q8K002</accession>
<keyword id="KW-0130">Cell adhesion</keyword>
<keyword id="KW-1003">Cell membrane</keyword>
<keyword id="KW-0966">Cell projection</keyword>
<keyword id="KW-1015">Disulfide bond</keyword>
<keyword id="KW-0245">EGF-like domain</keyword>
<keyword id="KW-0325">Glycoprotein</keyword>
<keyword id="KW-0472">Membrane</keyword>
<keyword id="KW-1185">Reference proteome</keyword>
<keyword id="KW-0677">Repeat</keyword>
<keyword id="KW-0732">Signal</keyword>
<keyword id="KW-0770">Synapse</keyword>
<keyword id="KW-0812">Transmembrane</keyword>
<keyword id="KW-1133">Transmembrane helix</keyword>
<protein>
    <recommendedName>
        <fullName>Contactin-associated protein-like 4</fullName>
    </recommendedName>
    <alternativeName>
        <fullName>Cell recognition molecule Caspr4</fullName>
    </alternativeName>
</protein>
<organism>
    <name type="scientific">Mus musculus</name>
    <name type="common">Mouse</name>
    <dbReference type="NCBI Taxonomy" id="10090"/>
    <lineage>
        <taxon>Eukaryota</taxon>
        <taxon>Metazoa</taxon>
        <taxon>Chordata</taxon>
        <taxon>Craniata</taxon>
        <taxon>Vertebrata</taxon>
        <taxon>Euteleostomi</taxon>
        <taxon>Mammalia</taxon>
        <taxon>Eutheria</taxon>
        <taxon>Euarchontoglires</taxon>
        <taxon>Glires</taxon>
        <taxon>Rodentia</taxon>
        <taxon>Myomorpha</taxon>
        <taxon>Muroidea</taxon>
        <taxon>Muridae</taxon>
        <taxon>Murinae</taxon>
        <taxon>Mus</taxon>
        <taxon>Mus</taxon>
    </lineage>
</organism>
<feature type="signal peptide" evidence="2">
    <location>
        <begin position="1"/>
        <end position="27"/>
    </location>
</feature>
<feature type="chain" id="PRO_0000019511" description="Contactin-associated protein-like 4">
    <location>
        <begin position="28"/>
        <end position="1310"/>
    </location>
</feature>
<feature type="topological domain" description="Extracellular" evidence="2">
    <location>
        <begin position="28"/>
        <end position="1243"/>
    </location>
</feature>
<feature type="transmembrane region" description="Helical" evidence="2">
    <location>
        <begin position="1244"/>
        <end position="1264"/>
    </location>
</feature>
<feature type="topological domain" description="Cytoplasmic" evidence="2">
    <location>
        <begin position="1265"/>
        <end position="1310"/>
    </location>
</feature>
<feature type="domain" description="F5/8 type C" evidence="4">
    <location>
        <begin position="33"/>
        <end position="179"/>
    </location>
</feature>
<feature type="domain" description="Laminin G-like 1" evidence="5">
    <location>
        <begin position="214"/>
        <end position="346"/>
    </location>
</feature>
<feature type="domain" description="Laminin G-like 2" evidence="5">
    <location>
        <begin position="400"/>
        <end position="529"/>
    </location>
</feature>
<feature type="domain" description="EGF-like 1" evidence="3">
    <location>
        <begin position="551"/>
        <end position="588"/>
    </location>
</feature>
<feature type="domain" description="Fibrinogen C-terminal" evidence="6">
    <location>
        <begin position="589"/>
        <end position="794"/>
    </location>
</feature>
<feature type="domain" description="Laminin G-like 3" evidence="5">
    <location>
        <begin position="795"/>
        <end position="960"/>
    </location>
</feature>
<feature type="domain" description="EGF-like 2" evidence="3">
    <location>
        <begin position="960"/>
        <end position="999"/>
    </location>
</feature>
<feature type="domain" description="Laminin G-like 4" evidence="5">
    <location>
        <begin position="1048"/>
        <end position="1204"/>
    </location>
</feature>
<feature type="glycosylation site" description="N-linked (GlcNAc...) asparagine" evidence="2">
    <location>
        <position position="262"/>
    </location>
</feature>
<feature type="glycosylation site" description="N-linked (GlcNAc...) asparagine" evidence="2">
    <location>
        <position position="287"/>
    </location>
</feature>
<feature type="glycosylation site" description="N-linked (GlcNAc...) asparagine" evidence="2">
    <location>
        <position position="361"/>
    </location>
</feature>
<feature type="glycosylation site" description="N-linked (GlcNAc...) asparagine" evidence="2">
    <location>
        <position position="540"/>
    </location>
</feature>
<feature type="glycosylation site" description="N-linked (GlcNAc...) asparagine" evidence="2">
    <location>
        <position position="576"/>
    </location>
</feature>
<feature type="glycosylation site" description="N-linked (GlcNAc...) asparagine" evidence="2">
    <location>
        <position position="604"/>
    </location>
</feature>
<feature type="glycosylation site" description="N-linked (GlcNAc...) asparagine" evidence="2">
    <location>
        <position position="627"/>
    </location>
</feature>
<feature type="glycosylation site" description="N-linked (GlcNAc...) asparagine" evidence="2">
    <location>
        <position position="639"/>
    </location>
</feature>
<feature type="glycosylation site" description="N-linked (GlcNAc...) asparagine" evidence="2">
    <location>
        <position position="708"/>
    </location>
</feature>
<feature type="glycosylation site" description="N-linked (GlcNAc...) asparagine" evidence="2">
    <location>
        <position position="750"/>
    </location>
</feature>
<feature type="glycosylation site" description="N-linked (GlcNAc...) asparagine" evidence="2">
    <location>
        <position position="1019"/>
    </location>
</feature>
<feature type="glycosylation site" description="N-linked (GlcNAc...) asparagine" evidence="2">
    <location>
        <position position="1025"/>
    </location>
</feature>
<feature type="glycosylation site" description="N-linked (GlcNAc...) asparagine" evidence="2">
    <location>
        <position position="1075"/>
    </location>
</feature>
<feature type="disulfide bond" evidence="1">
    <location>
        <begin position="33"/>
        <end position="179"/>
    </location>
</feature>
<feature type="disulfide bond" evidence="1">
    <location>
        <begin position="334"/>
        <end position="366"/>
    </location>
</feature>
<feature type="disulfide bond" evidence="1">
    <location>
        <begin position="517"/>
        <end position="549"/>
    </location>
</feature>
<feature type="disulfide bond" evidence="1">
    <location>
        <begin position="555"/>
        <end position="566"/>
    </location>
</feature>
<feature type="disulfide bond" evidence="1">
    <location>
        <begin position="560"/>
        <end position="575"/>
    </location>
</feature>
<feature type="disulfide bond" evidence="1">
    <location>
        <begin position="577"/>
        <end position="587"/>
    </location>
</feature>
<feature type="disulfide bond" evidence="1">
    <location>
        <begin position="933"/>
        <end position="960"/>
    </location>
</feature>
<feature type="disulfide bond" evidence="1">
    <location>
        <begin position="964"/>
        <end position="977"/>
    </location>
</feature>
<feature type="disulfide bond" evidence="1">
    <location>
        <begin position="971"/>
        <end position="986"/>
    </location>
</feature>
<feature type="disulfide bond" evidence="1">
    <location>
        <begin position="988"/>
        <end position="998"/>
    </location>
</feature>
<feature type="disulfide bond" evidence="1">
    <location>
        <begin position="1169"/>
        <end position="1204"/>
    </location>
</feature>
<feature type="sequence conflict" description="In Ref. 1; AAG52890." evidence="8" ref="1">
    <original>Y</original>
    <variation>F</variation>
    <location>
        <position position="993"/>
    </location>
</feature>